<gene>
    <name evidence="1" type="primary">rpmI</name>
    <name type="ordered locus">Bphy_1556</name>
</gene>
<dbReference type="EMBL" id="CP001043">
    <property type="protein sequence ID" value="ACC70738.1"/>
    <property type="molecule type" value="Genomic_DNA"/>
</dbReference>
<dbReference type="RefSeq" id="WP_004191477.1">
    <property type="nucleotide sequence ID" value="NZ_CADFGH010000004.1"/>
</dbReference>
<dbReference type="SMR" id="B2JJJ5"/>
<dbReference type="STRING" id="391038.Bphy_1556"/>
<dbReference type="GeneID" id="98102115"/>
<dbReference type="KEGG" id="bph:Bphy_1556"/>
<dbReference type="eggNOG" id="COG0291">
    <property type="taxonomic scope" value="Bacteria"/>
</dbReference>
<dbReference type="HOGENOM" id="CLU_169643_1_0_4"/>
<dbReference type="OrthoDB" id="47476at2"/>
<dbReference type="Proteomes" id="UP000001192">
    <property type="component" value="Chromosome 1"/>
</dbReference>
<dbReference type="GO" id="GO:0022625">
    <property type="term" value="C:cytosolic large ribosomal subunit"/>
    <property type="evidence" value="ECO:0007669"/>
    <property type="project" value="TreeGrafter"/>
</dbReference>
<dbReference type="GO" id="GO:0003735">
    <property type="term" value="F:structural constituent of ribosome"/>
    <property type="evidence" value="ECO:0007669"/>
    <property type="project" value="InterPro"/>
</dbReference>
<dbReference type="GO" id="GO:0006412">
    <property type="term" value="P:translation"/>
    <property type="evidence" value="ECO:0007669"/>
    <property type="project" value="UniProtKB-UniRule"/>
</dbReference>
<dbReference type="FunFam" id="4.10.410.60:FF:000001">
    <property type="entry name" value="50S ribosomal protein L35"/>
    <property type="match status" value="1"/>
</dbReference>
<dbReference type="Gene3D" id="4.10.410.60">
    <property type="match status" value="1"/>
</dbReference>
<dbReference type="HAMAP" id="MF_00514">
    <property type="entry name" value="Ribosomal_bL35"/>
    <property type="match status" value="1"/>
</dbReference>
<dbReference type="InterPro" id="IPR001706">
    <property type="entry name" value="Ribosomal_bL35"/>
</dbReference>
<dbReference type="InterPro" id="IPR021137">
    <property type="entry name" value="Ribosomal_bL35-like"/>
</dbReference>
<dbReference type="InterPro" id="IPR018265">
    <property type="entry name" value="Ribosomal_bL35_CS"/>
</dbReference>
<dbReference type="InterPro" id="IPR037229">
    <property type="entry name" value="Ribosomal_bL35_sf"/>
</dbReference>
<dbReference type="NCBIfam" id="TIGR00001">
    <property type="entry name" value="rpmI_bact"/>
    <property type="match status" value="1"/>
</dbReference>
<dbReference type="PANTHER" id="PTHR33343">
    <property type="entry name" value="54S RIBOSOMAL PROTEIN BL35M"/>
    <property type="match status" value="1"/>
</dbReference>
<dbReference type="PANTHER" id="PTHR33343:SF1">
    <property type="entry name" value="LARGE RIBOSOMAL SUBUNIT PROTEIN BL35M"/>
    <property type="match status" value="1"/>
</dbReference>
<dbReference type="Pfam" id="PF01632">
    <property type="entry name" value="Ribosomal_L35p"/>
    <property type="match status" value="1"/>
</dbReference>
<dbReference type="PRINTS" id="PR00064">
    <property type="entry name" value="RIBOSOMALL35"/>
</dbReference>
<dbReference type="SUPFAM" id="SSF143034">
    <property type="entry name" value="L35p-like"/>
    <property type="match status" value="1"/>
</dbReference>
<dbReference type="PROSITE" id="PS00936">
    <property type="entry name" value="RIBOSOMAL_L35"/>
    <property type="match status" value="1"/>
</dbReference>
<evidence type="ECO:0000255" key="1">
    <source>
        <dbReference type="HAMAP-Rule" id="MF_00514"/>
    </source>
</evidence>
<evidence type="ECO:0000305" key="2"/>
<sequence>MPKMKTKKSAAKRFVVRPGGTVKRGQAFKRHILTKKTTKNKRHLRGATAVHDSDLNSVRAMLPFA</sequence>
<proteinExistence type="inferred from homology"/>
<organism>
    <name type="scientific">Paraburkholderia phymatum (strain DSM 17167 / CIP 108236 / LMG 21445 / STM815)</name>
    <name type="common">Burkholderia phymatum</name>
    <dbReference type="NCBI Taxonomy" id="391038"/>
    <lineage>
        <taxon>Bacteria</taxon>
        <taxon>Pseudomonadati</taxon>
        <taxon>Pseudomonadota</taxon>
        <taxon>Betaproteobacteria</taxon>
        <taxon>Burkholderiales</taxon>
        <taxon>Burkholderiaceae</taxon>
        <taxon>Paraburkholderia</taxon>
    </lineage>
</organism>
<comment type="similarity">
    <text evidence="1">Belongs to the bacterial ribosomal protein bL35 family.</text>
</comment>
<feature type="chain" id="PRO_1000127320" description="Large ribosomal subunit protein bL35">
    <location>
        <begin position="1"/>
        <end position="65"/>
    </location>
</feature>
<protein>
    <recommendedName>
        <fullName evidence="1">Large ribosomal subunit protein bL35</fullName>
    </recommendedName>
    <alternativeName>
        <fullName evidence="2">50S ribosomal protein L35</fullName>
    </alternativeName>
</protein>
<keyword id="KW-1185">Reference proteome</keyword>
<keyword id="KW-0687">Ribonucleoprotein</keyword>
<keyword id="KW-0689">Ribosomal protein</keyword>
<accession>B2JJJ5</accession>
<reference key="1">
    <citation type="journal article" date="2014" name="Stand. Genomic Sci.">
        <title>Complete genome sequence of Burkholderia phymatum STM815(T), a broad host range and efficient nitrogen-fixing symbiont of Mimosa species.</title>
        <authorList>
            <person name="Moulin L."/>
            <person name="Klonowska A."/>
            <person name="Caroline B."/>
            <person name="Booth K."/>
            <person name="Vriezen J.A."/>
            <person name="Melkonian R."/>
            <person name="James E.K."/>
            <person name="Young J.P."/>
            <person name="Bena G."/>
            <person name="Hauser L."/>
            <person name="Land M."/>
            <person name="Kyrpides N."/>
            <person name="Bruce D."/>
            <person name="Chain P."/>
            <person name="Copeland A."/>
            <person name="Pitluck S."/>
            <person name="Woyke T."/>
            <person name="Lizotte-Waniewski M."/>
            <person name="Bristow J."/>
            <person name="Riley M."/>
        </authorList>
    </citation>
    <scope>NUCLEOTIDE SEQUENCE [LARGE SCALE GENOMIC DNA]</scope>
    <source>
        <strain>DSM 17167 / CIP 108236 / LMG 21445 / STM815</strain>
    </source>
</reference>
<name>RL35_PARP8</name>